<comment type="function">
    <text>Zeins are major seed storage proteins.</text>
</comment>
<comment type="subcellular location">
    <subcellularLocation>
        <location>Vacuole</location>
        <location>Aleurone grain</location>
    </subcellularLocation>
    <text>Endosperm protein bodies.</text>
</comment>
<reference key="1">
    <citation type="journal article" date="1985" name="J. Biol. Chem.">
        <title>Nucleotide sequence analysis of zein mRNAs from maize endosperm.</title>
        <authorList>
            <person name="Marks M.D."/>
            <person name="Lindell J.S."/>
            <person name="Larkins B.A."/>
        </authorList>
    </citation>
    <scope>NUCLEOTIDE SEQUENCE [MRNA]</scope>
</reference>
<sequence length="180" mass="19531">MKMVIVLVVWLALSAASASAMQMPCPCAGLQGLYGAGAGLTTMMGAGGLYPYAEYLRQPQCSPLAAAPYYAGCGQTSAMYQPLRQQCCQQQMRMMDVQSVAQQLQMMMQLERAATASSSLYEPALMQQQQQLLAAQGLNPMAMMMAQNMPAMGGLYQYQYQLPSYRTNPCGVSAAIPPYY</sequence>
<organism>
    <name type="scientific">Zea mays</name>
    <name type="common">Maize</name>
    <dbReference type="NCBI Taxonomy" id="4577"/>
    <lineage>
        <taxon>Eukaryota</taxon>
        <taxon>Viridiplantae</taxon>
        <taxon>Streptophyta</taxon>
        <taxon>Embryophyta</taxon>
        <taxon>Tracheophyta</taxon>
        <taxon>Spermatophyta</taxon>
        <taxon>Magnoliopsida</taxon>
        <taxon>Liliopsida</taxon>
        <taxon>Poales</taxon>
        <taxon>Poaceae</taxon>
        <taxon>PACMAD clade</taxon>
        <taxon>Panicoideae</taxon>
        <taxon>Andropogonodae</taxon>
        <taxon>Andropogoneae</taxon>
        <taxon>Tripsacinae</taxon>
        <taxon>Zea</taxon>
    </lineage>
</organism>
<evidence type="ECO:0000255" key="1"/>
<protein>
    <recommendedName>
        <fullName>Zein-beta</fullName>
    </recommendedName>
    <alternativeName>
        <fullName>16 kDa zein</fullName>
    </alternativeName>
    <alternativeName>
        <fullName>Zein clone 15A3</fullName>
    </alternativeName>
    <alternativeName>
        <fullName>Zein-2</fullName>
    </alternativeName>
</protein>
<feature type="signal peptide" evidence="1">
    <location>
        <begin position="1"/>
        <end position="19"/>
    </location>
</feature>
<feature type="chain" id="PRO_0000022718" description="Zein-beta">
    <location>
        <begin position="20"/>
        <end position="180"/>
    </location>
</feature>
<proteinExistence type="evidence at transcript level"/>
<keyword id="KW-1185">Reference proteome</keyword>
<keyword id="KW-0677">Repeat</keyword>
<keyword id="KW-0708">Seed storage protein</keyword>
<keyword id="KW-0732">Signal</keyword>
<keyword id="KW-0758">Storage protein</keyword>
<keyword id="KW-0926">Vacuole</keyword>
<accession>P06673</accession>
<dbReference type="EMBL" id="M12147">
    <property type="protein sequence ID" value="AAA33521.1"/>
    <property type="molecule type" value="mRNA"/>
</dbReference>
<dbReference type="STRING" id="4577.P06673"/>
<dbReference type="PaxDb" id="4577-GRMZM2G086294_P01"/>
<dbReference type="MaizeGDB" id="58053"/>
<dbReference type="InParanoid" id="P06673"/>
<dbReference type="Proteomes" id="UP000007305">
    <property type="component" value="Unplaced"/>
</dbReference>
<dbReference type="ExpressionAtlas" id="P06673">
    <property type="expression patterns" value="baseline and differential"/>
</dbReference>
<dbReference type="GO" id="GO:0033095">
    <property type="term" value="C:aleurone grain"/>
    <property type="evidence" value="ECO:0007669"/>
    <property type="project" value="UniProtKB-SubCell"/>
</dbReference>
<dbReference type="GO" id="GO:0005773">
    <property type="term" value="C:vacuole"/>
    <property type="evidence" value="ECO:0007669"/>
    <property type="project" value="UniProtKB-KW"/>
</dbReference>
<dbReference type="GO" id="GO:0045735">
    <property type="term" value="F:nutrient reservoir activity"/>
    <property type="evidence" value="ECO:0007669"/>
    <property type="project" value="UniProtKB-KW"/>
</dbReference>
<dbReference type="InterPro" id="IPR001954">
    <property type="entry name" value="Glia_glutenin"/>
</dbReference>
<dbReference type="PANTHER" id="PTHR33454">
    <property type="entry name" value="PROLAMIN PPROL 14P"/>
    <property type="match status" value="1"/>
</dbReference>
<dbReference type="PANTHER" id="PTHR33454:SF19">
    <property type="entry name" value="PROLAMIN PPROL 14P"/>
    <property type="match status" value="1"/>
</dbReference>
<name>ZEB1_MAIZE</name>